<comment type="function">
    <text evidence="1">Catalyzes the hydrolysis of N-succinyl-L,L-diaminopimelic acid (SDAP), forming succinate and LL-2,6-diaminopimelate (DAP), an intermediate involved in the bacterial biosynthesis of lysine and meso-diaminopimelic acid, an essential component of bacterial cell walls.</text>
</comment>
<comment type="catalytic activity">
    <reaction evidence="1">
        <text>N-succinyl-(2S,6S)-2,6-diaminopimelate + H2O = (2S,6S)-2,6-diaminopimelate + succinate</text>
        <dbReference type="Rhea" id="RHEA:22608"/>
        <dbReference type="ChEBI" id="CHEBI:15377"/>
        <dbReference type="ChEBI" id="CHEBI:30031"/>
        <dbReference type="ChEBI" id="CHEBI:57609"/>
        <dbReference type="ChEBI" id="CHEBI:58087"/>
        <dbReference type="EC" id="3.5.1.18"/>
    </reaction>
</comment>
<comment type="cofactor">
    <cofactor evidence="1">
        <name>Zn(2+)</name>
        <dbReference type="ChEBI" id="CHEBI:29105"/>
    </cofactor>
    <cofactor evidence="1">
        <name>Co(2+)</name>
        <dbReference type="ChEBI" id="CHEBI:48828"/>
    </cofactor>
    <text evidence="1">Binds 2 Zn(2+) or Co(2+) ions per subunit.</text>
</comment>
<comment type="pathway">
    <text evidence="1">Amino-acid biosynthesis; L-lysine biosynthesis via DAP pathway; LL-2,6-diaminopimelate from (S)-tetrahydrodipicolinate (succinylase route): step 3/3.</text>
</comment>
<comment type="subunit">
    <text evidence="1">Homodimer.</text>
</comment>
<comment type="similarity">
    <text evidence="1">Belongs to the peptidase M20A family. DapE subfamily.</text>
</comment>
<keyword id="KW-0028">Amino-acid biosynthesis</keyword>
<keyword id="KW-0170">Cobalt</keyword>
<keyword id="KW-0220">Diaminopimelate biosynthesis</keyword>
<keyword id="KW-0378">Hydrolase</keyword>
<keyword id="KW-0457">Lysine biosynthesis</keyword>
<keyword id="KW-0479">Metal-binding</keyword>
<keyword id="KW-0862">Zinc</keyword>
<proteinExistence type="inferred from homology"/>
<protein>
    <recommendedName>
        <fullName evidence="1">Succinyl-diaminopimelate desuccinylase</fullName>
        <shortName evidence="1">SDAP desuccinylase</shortName>
        <ecNumber evidence="1">3.5.1.18</ecNumber>
    </recommendedName>
    <alternativeName>
        <fullName evidence="1">N-succinyl-LL-2,6-diaminoheptanedioate amidohydrolase</fullName>
    </alternativeName>
</protein>
<name>DAPE_SALEP</name>
<sequence>MSCPVIELTQQLIRRPSLSPDDAGCQALMIERLRKIGFTIEHMDFGDTQNFWAWRGRGETLAFAGHTDVVPAGDVDRWINPPFEPTIRDGMLFGRGAADMKGSLAAMVVAAERFVAQHPHHRGRLAFLITSDEEASAKNGTVKVVEALMARNERLDYCLVGEPSSTEIVGDVVKNGRRGSLTCNLTIHGVQGHVAYPHLADNPVHRAAPFLNELVAIEWDRGNDFFPATSMQVANIQAGTGSNNVIPGELFVQFNFRFSTELTDEMIKERVHALLEKHQLRYTVDWWLSGQPFLTARGKLVDAVVNAIEHYNEIKPQLLTTGGTSDGRFIARMGAQVVELGPVNATIHKINECVNAADLQLLARMYQRIMEQLVA</sequence>
<feature type="chain" id="PRO_0000375714" description="Succinyl-diaminopimelate desuccinylase">
    <location>
        <begin position="1"/>
        <end position="375"/>
    </location>
</feature>
<feature type="active site" evidence="1">
    <location>
        <position position="68"/>
    </location>
</feature>
<feature type="active site" description="Proton acceptor" evidence="1">
    <location>
        <position position="133"/>
    </location>
</feature>
<feature type="binding site" evidence="1">
    <location>
        <position position="66"/>
    </location>
    <ligand>
        <name>Zn(2+)</name>
        <dbReference type="ChEBI" id="CHEBI:29105"/>
        <label>1</label>
    </ligand>
</feature>
<feature type="binding site" evidence="1">
    <location>
        <position position="99"/>
    </location>
    <ligand>
        <name>Zn(2+)</name>
        <dbReference type="ChEBI" id="CHEBI:29105"/>
        <label>1</label>
    </ligand>
</feature>
<feature type="binding site" evidence="1">
    <location>
        <position position="99"/>
    </location>
    <ligand>
        <name>Zn(2+)</name>
        <dbReference type="ChEBI" id="CHEBI:29105"/>
        <label>2</label>
    </ligand>
</feature>
<feature type="binding site" evidence="1">
    <location>
        <position position="134"/>
    </location>
    <ligand>
        <name>Zn(2+)</name>
        <dbReference type="ChEBI" id="CHEBI:29105"/>
        <label>2</label>
    </ligand>
</feature>
<feature type="binding site" evidence="1">
    <location>
        <position position="162"/>
    </location>
    <ligand>
        <name>Zn(2+)</name>
        <dbReference type="ChEBI" id="CHEBI:29105"/>
        <label>1</label>
    </ligand>
</feature>
<feature type="binding site" evidence="1">
    <location>
        <position position="348"/>
    </location>
    <ligand>
        <name>Zn(2+)</name>
        <dbReference type="ChEBI" id="CHEBI:29105"/>
        <label>2</label>
    </ligand>
</feature>
<organism>
    <name type="scientific">Salmonella enteritidis PT4 (strain P125109)</name>
    <dbReference type="NCBI Taxonomy" id="550537"/>
    <lineage>
        <taxon>Bacteria</taxon>
        <taxon>Pseudomonadati</taxon>
        <taxon>Pseudomonadota</taxon>
        <taxon>Gammaproteobacteria</taxon>
        <taxon>Enterobacterales</taxon>
        <taxon>Enterobacteriaceae</taxon>
        <taxon>Salmonella</taxon>
    </lineage>
</organism>
<reference key="1">
    <citation type="journal article" date="2008" name="Genome Res.">
        <title>Comparative genome analysis of Salmonella enteritidis PT4 and Salmonella gallinarum 287/91 provides insights into evolutionary and host adaptation pathways.</title>
        <authorList>
            <person name="Thomson N.R."/>
            <person name="Clayton D.J."/>
            <person name="Windhorst D."/>
            <person name="Vernikos G."/>
            <person name="Davidson S."/>
            <person name="Churcher C."/>
            <person name="Quail M.A."/>
            <person name="Stevens M."/>
            <person name="Jones M.A."/>
            <person name="Watson M."/>
            <person name="Barron A."/>
            <person name="Layton A."/>
            <person name="Pickard D."/>
            <person name="Kingsley R.A."/>
            <person name="Bignell A."/>
            <person name="Clark L."/>
            <person name="Harris B."/>
            <person name="Ormond D."/>
            <person name="Abdellah Z."/>
            <person name="Brooks K."/>
            <person name="Cherevach I."/>
            <person name="Chillingworth T."/>
            <person name="Woodward J."/>
            <person name="Norberczak H."/>
            <person name="Lord A."/>
            <person name="Arrowsmith C."/>
            <person name="Jagels K."/>
            <person name="Moule S."/>
            <person name="Mungall K."/>
            <person name="Saunders M."/>
            <person name="Whitehead S."/>
            <person name="Chabalgoity J.A."/>
            <person name="Maskell D."/>
            <person name="Humphreys T."/>
            <person name="Roberts M."/>
            <person name="Barrow P.A."/>
            <person name="Dougan G."/>
            <person name="Parkhill J."/>
        </authorList>
    </citation>
    <scope>NUCLEOTIDE SEQUENCE [LARGE SCALE GENOMIC DNA]</scope>
    <source>
        <strain>P125109</strain>
    </source>
</reference>
<accession>B5R4J0</accession>
<evidence type="ECO:0000255" key="1">
    <source>
        <dbReference type="HAMAP-Rule" id="MF_01690"/>
    </source>
</evidence>
<gene>
    <name evidence="1" type="primary">dapE</name>
    <name type="ordered locus">SEN2462</name>
</gene>
<dbReference type="EC" id="3.5.1.18" evidence="1"/>
<dbReference type="EMBL" id="AM933172">
    <property type="protein sequence ID" value="CAR34047.1"/>
    <property type="molecule type" value="Genomic_DNA"/>
</dbReference>
<dbReference type="RefSeq" id="WP_001277825.1">
    <property type="nucleotide sequence ID" value="NC_011294.1"/>
</dbReference>
<dbReference type="SMR" id="B5R4J0"/>
<dbReference type="KEGG" id="set:SEN2462"/>
<dbReference type="HOGENOM" id="CLU_021802_4_0_6"/>
<dbReference type="UniPathway" id="UPA00034">
    <property type="reaction ID" value="UER00021"/>
</dbReference>
<dbReference type="Proteomes" id="UP000000613">
    <property type="component" value="Chromosome"/>
</dbReference>
<dbReference type="GO" id="GO:0008777">
    <property type="term" value="F:acetylornithine deacetylase activity"/>
    <property type="evidence" value="ECO:0007669"/>
    <property type="project" value="TreeGrafter"/>
</dbReference>
<dbReference type="GO" id="GO:0050897">
    <property type="term" value="F:cobalt ion binding"/>
    <property type="evidence" value="ECO:0007669"/>
    <property type="project" value="UniProtKB-UniRule"/>
</dbReference>
<dbReference type="GO" id="GO:0009014">
    <property type="term" value="F:succinyl-diaminopimelate desuccinylase activity"/>
    <property type="evidence" value="ECO:0007669"/>
    <property type="project" value="UniProtKB-UniRule"/>
</dbReference>
<dbReference type="GO" id="GO:0008270">
    <property type="term" value="F:zinc ion binding"/>
    <property type="evidence" value="ECO:0007669"/>
    <property type="project" value="UniProtKB-UniRule"/>
</dbReference>
<dbReference type="GO" id="GO:0019877">
    <property type="term" value="P:diaminopimelate biosynthetic process"/>
    <property type="evidence" value="ECO:0007669"/>
    <property type="project" value="UniProtKB-UniRule"/>
</dbReference>
<dbReference type="GO" id="GO:0006526">
    <property type="term" value="P:L-arginine biosynthetic process"/>
    <property type="evidence" value="ECO:0007669"/>
    <property type="project" value="TreeGrafter"/>
</dbReference>
<dbReference type="GO" id="GO:0009089">
    <property type="term" value="P:lysine biosynthetic process via diaminopimelate"/>
    <property type="evidence" value="ECO:0007669"/>
    <property type="project" value="UniProtKB-UniRule"/>
</dbReference>
<dbReference type="CDD" id="cd03891">
    <property type="entry name" value="M20_DapE_proteobac"/>
    <property type="match status" value="1"/>
</dbReference>
<dbReference type="FunFam" id="3.30.70.360:FF:000011">
    <property type="entry name" value="Succinyl-diaminopimelate desuccinylase"/>
    <property type="match status" value="1"/>
</dbReference>
<dbReference type="FunFam" id="3.40.630.10:FF:000005">
    <property type="entry name" value="Succinyl-diaminopimelate desuccinylase"/>
    <property type="match status" value="1"/>
</dbReference>
<dbReference type="FunFam" id="3.40.630.10:FF:000010">
    <property type="entry name" value="Succinyl-diaminopimelate desuccinylase"/>
    <property type="match status" value="1"/>
</dbReference>
<dbReference type="Gene3D" id="3.40.630.10">
    <property type="entry name" value="Zn peptidases"/>
    <property type="match status" value="2"/>
</dbReference>
<dbReference type="HAMAP" id="MF_01690">
    <property type="entry name" value="DapE"/>
    <property type="match status" value="1"/>
</dbReference>
<dbReference type="InterPro" id="IPR001261">
    <property type="entry name" value="ArgE/DapE_CS"/>
</dbReference>
<dbReference type="InterPro" id="IPR036264">
    <property type="entry name" value="Bact_exopeptidase_dim_dom"/>
</dbReference>
<dbReference type="InterPro" id="IPR005941">
    <property type="entry name" value="DapE_proteobac"/>
</dbReference>
<dbReference type="InterPro" id="IPR002933">
    <property type="entry name" value="Peptidase_M20"/>
</dbReference>
<dbReference type="InterPro" id="IPR011650">
    <property type="entry name" value="Peptidase_M20_dimer"/>
</dbReference>
<dbReference type="InterPro" id="IPR050072">
    <property type="entry name" value="Peptidase_M20A"/>
</dbReference>
<dbReference type="NCBIfam" id="TIGR01246">
    <property type="entry name" value="dapE_proteo"/>
    <property type="match status" value="1"/>
</dbReference>
<dbReference type="NCBIfam" id="NF009557">
    <property type="entry name" value="PRK13009.1"/>
    <property type="match status" value="1"/>
</dbReference>
<dbReference type="PANTHER" id="PTHR43808">
    <property type="entry name" value="ACETYLORNITHINE DEACETYLASE"/>
    <property type="match status" value="1"/>
</dbReference>
<dbReference type="PANTHER" id="PTHR43808:SF31">
    <property type="entry name" value="N-ACETYL-L-CITRULLINE DEACETYLASE"/>
    <property type="match status" value="1"/>
</dbReference>
<dbReference type="Pfam" id="PF07687">
    <property type="entry name" value="M20_dimer"/>
    <property type="match status" value="1"/>
</dbReference>
<dbReference type="Pfam" id="PF01546">
    <property type="entry name" value="Peptidase_M20"/>
    <property type="match status" value="1"/>
</dbReference>
<dbReference type="SUPFAM" id="SSF55031">
    <property type="entry name" value="Bacterial exopeptidase dimerisation domain"/>
    <property type="match status" value="1"/>
</dbReference>
<dbReference type="SUPFAM" id="SSF53187">
    <property type="entry name" value="Zn-dependent exopeptidases"/>
    <property type="match status" value="1"/>
</dbReference>
<dbReference type="PROSITE" id="PS00758">
    <property type="entry name" value="ARGE_DAPE_CPG2_1"/>
    <property type="match status" value="1"/>
</dbReference>
<dbReference type="PROSITE" id="PS00759">
    <property type="entry name" value="ARGE_DAPE_CPG2_2"/>
    <property type="match status" value="1"/>
</dbReference>